<gene>
    <name type="primary">HEMB</name>
    <name type="synonym">ALAD</name>
</gene>
<dbReference type="EC" id="4.2.1.24"/>
<dbReference type="EMBL" id="U19876">
    <property type="protein sequence ID" value="AAA79515.1"/>
    <property type="molecule type" value="mRNA"/>
</dbReference>
<dbReference type="PIR" id="S53487">
    <property type="entry name" value="S53487"/>
</dbReference>
<dbReference type="SMR" id="Q42682"/>
<dbReference type="PaxDb" id="3055-EDP06754"/>
<dbReference type="ProMEX" id="Q42682"/>
<dbReference type="eggNOG" id="KOG2794">
    <property type="taxonomic scope" value="Eukaryota"/>
</dbReference>
<dbReference type="UniPathway" id="UPA00251">
    <property type="reaction ID" value="UER00318"/>
</dbReference>
<dbReference type="GO" id="GO:0009507">
    <property type="term" value="C:chloroplast"/>
    <property type="evidence" value="ECO:0007669"/>
    <property type="project" value="UniProtKB-SubCell"/>
</dbReference>
<dbReference type="GO" id="GO:0046872">
    <property type="term" value="F:metal ion binding"/>
    <property type="evidence" value="ECO:0007669"/>
    <property type="project" value="UniProtKB-KW"/>
</dbReference>
<dbReference type="GO" id="GO:0004655">
    <property type="term" value="F:porphobilinogen synthase activity"/>
    <property type="evidence" value="ECO:0007669"/>
    <property type="project" value="UniProtKB-EC"/>
</dbReference>
<dbReference type="GO" id="GO:0015995">
    <property type="term" value="P:chlorophyll biosynthetic process"/>
    <property type="evidence" value="ECO:0007669"/>
    <property type="project" value="UniProtKB-KW"/>
</dbReference>
<dbReference type="GO" id="GO:0006782">
    <property type="term" value="P:protoporphyrinogen IX biosynthetic process"/>
    <property type="evidence" value="ECO:0007669"/>
    <property type="project" value="UniProtKB-UniPathway"/>
</dbReference>
<dbReference type="CDD" id="cd04823">
    <property type="entry name" value="ALAD_PBGS_aspartate_rich"/>
    <property type="match status" value="1"/>
</dbReference>
<dbReference type="FunFam" id="3.20.20.70:FF:000101">
    <property type="entry name" value="Delta-aminolevulinic acid dehydratase"/>
    <property type="match status" value="1"/>
</dbReference>
<dbReference type="Gene3D" id="3.20.20.70">
    <property type="entry name" value="Aldolase class I"/>
    <property type="match status" value="1"/>
</dbReference>
<dbReference type="InterPro" id="IPR001731">
    <property type="entry name" value="ALAD"/>
</dbReference>
<dbReference type="InterPro" id="IPR030656">
    <property type="entry name" value="ALAD_AS"/>
</dbReference>
<dbReference type="InterPro" id="IPR013785">
    <property type="entry name" value="Aldolase_TIM"/>
</dbReference>
<dbReference type="NCBIfam" id="NF006762">
    <property type="entry name" value="PRK09283.1"/>
    <property type="match status" value="1"/>
</dbReference>
<dbReference type="PANTHER" id="PTHR11458">
    <property type="entry name" value="DELTA-AMINOLEVULINIC ACID DEHYDRATASE"/>
    <property type="match status" value="1"/>
</dbReference>
<dbReference type="PANTHER" id="PTHR11458:SF0">
    <property type="entry name" value="DELTA-AMINOLEVULINIC ACID DEHYDRATASE"/>
    <property type="match status" value="1"/>
</dbReference>
<dbReference type="Pfam" id="PF00490">
    <property type="entry name" value="ALAD"/>
    <property type="match status" value="1"/>
</dbReference>
<dbReference type="PRINTS" id="PR00144">
    <property type="entry name" value="DALDHYDRTASE"/>
</dbReference>
<dbReference type="SMART" id="SM01004">
    <property type="entry name" value="ALAD"/>
    <property type="match status" value="1"/>
</dbReference>
<dbReference type="SUPFAM" id="SSF51569">
    <property type="entry name" value="Aldolase"/>
    <property type="match status" value="1"/>
</dbReference>
<dbReference type="PROSITE" id="PS00169">
    <property type="entry name" value="D_ALA_DEHYDRATASE"/>
    <property type="match status" value="1"/>
</dbReference>
<name>HEM2_CHLRE</name>
<evidence type="ECO:0000250" key="1"/>
<evidence type="ECO:0000255" key="2"/>
<evidence type="ECO:0000256" key="3">
    <source>
        <dbReference type="SAM" id="MobiDB-lite"/>
    </source>
</evidence>
<evidence type="ECO:0000305" key="4"/>
<accession>Q42682</accession>
<proteinExistence type="evidence at transcript level"/>
<keyword id="KW-0021">Allosteric enzyme</keyword>
<keyword id="KW-0149">Chlorophyll biosynthesis</keyword>
<keyword id="KW-0150">Chloroplast</keyword>
<keyword id="KW-0350">Heme biosynthesis</keyword>
<keyword id="KW-0456">Lyase</keyword>
<keyword id="KW-0460">Magnesium</keyword>
<keyword id="KW-0479">Metal-binding</keyword>
<keyword id="KW-0934">Plastid</keyword>
<keyword id="KW-0627">Porphyrin biosynthesis</keyword>
<keyword id="KW-0809">Transit peptide</keyword>
<organism>
    <name type="scientific">Chlamydomonas reinhardtii</name>
    <name type="common">Chlamydomonas smithii</name>
    <dbReference type="NCBI Taxonomy" id="3055"/>
    <lineage>
        <taxon>Eukaryota</taxon>
        <taxon>Viridiplantae</taxon>
        <taxon>Chlorophyta</taxon>
        <taxon>core chlorophytes</taxon>
        <taxon>Chlorophyceae</taxon>
        <taxon>CS clade</taxon>
        <taxon>Chlamydomonadales</taxon>
        <taxon>Chlamydomonadaceae</taxon>
        <taxon>Chlamydomonas</taxon>
    </lineage>
</organism>
<feature type="transit peptide" description="Chloroplast" evidence="2">
    <location>
        <begin position="1"/>
        <end position="24"/>
    </location>
</feature>
<feature type="chain" id="PRO_0000013315" description="Delta-aminolevulinic acid dehydratase, chloroplastic">
    <location>
        <begin position="25"/>
        <end position="390"/>
    </location>
</feature>
<feature type="region of interest" description="Disordered" evidence="3">
    <location>
        <begin position="34"/>
        <end position="69"/>
    </location>
</feature>
<feature type="active site" description="Schiff-base intermediate with substrate" evidence="1">
    <location>
        <position position="251"/>
    </location>
</feature>
<feature type="active site" description="Schiff-base intermediate with substrate" evidence="1">
    <location>
        <position position="312"/>
    </location>
</feature>
<feature type="binding site" evidence="1">
    <location>
        <position position="261"/>
    </location>
    <ligand>
        <name>5-aminolevulinate</name>
        <dbReference type="ChEBI" id="CHEBI:356416"/>
        <label>1</label>
    </ligand>
</feature>
<feature type="binding site" evidence="1">
    <location>
        <position position="281"/>
    </location>
    <ligand>
        <name>5-aminolevulinate</name>
        <dbReference type="ChEBI" id="CHEBI:356416"/>
        <label>1</label>
    </ligand>
</feature>
<feature type="binding site" evidence="1">
    <location>
        <position position="297"/>
    </location>
    <ligand>
        <name>Mg(2+)</name>
        <dbReference type="ChEBI" id="CHEBI:18420"/>
    </ligand>
</feature>
<feature type="binding site" evidence="1">
    <location>
        <position position="338"/>
    </location>
    <ligand>
        <name>5-aminolevulinate</name>
        <dbReference type="ChEBI" id="CHEBI:356416"/>
        <label>2</label>
    </ligand>
</feature>
<feature type="binding site" evidence="1">
    <location>
        <position position="377"/>
    </location>
    <ligand>
        <name>5-aminolevulinate</name>
        <dbReference type="ChEBI" id="CHEBI:356416"/>
        <label>2</label>
    </ligand>
</feature>
<reference key="1">
    <citation type="journal article" date="1995" name="Plant Mol. Biol.">
        <title>Structure and expression of the Chlamydomonas reinhardtii alad gene encoding the chlorophyll biosynthetic enzyme, delta-aminolevulinic acid dehydratase (porphobilinogen synthase).</title>
        <authorList>
            <person name="Matters G.L."/>
            <person name="Beale S.I."/>
        </authorList>
    </citation>
    <scope>NUCLEOTIDE SEQUENCE [MRNA]</scope>
    <source>
        <strain>NO-</strain>
    </source>
</reference>
<protein>
    <recommendedName>
        <fullName>Delta-aminolevulinic acid dehydratase, chloroplastic</fullName>
        <shortName>ALADH</shortName>
        <ecNumber>4.2.1.24</ecNumber>
    </recommendedName>
    <alternativeName>
        <fullName>Porphobilinogen synthase</fullName>
    </alternativeName>
</protein>
<sequence>MQMMQRNVVGQRPVAGSRRSLVVANVAEVTRPAVSTNGKHRTGVPEGTPIVTPQDLPSRPRRNRRSESFRASVREVNVSPANFILPIFIHEESNQNVPIASMPGINRLAYGKNVIDYVAEPRSYGVNQVVVFPKTPDHLKTQTAEEAFNKNGLSQRTIRLLKDSFPDLEVYTDVALDPYNSDGHDGIVSDAGVILNDETIEYLCRQAVSQAEAGADVVSPSDMMDGRVGAIRRALDREGFTNVSIMSYTAKYASAYYGPFRDALASAPKPGQAHRRIPPNKKTYQMDPANYREAIREAKADEAEGADIMMVKPGMPYLDVVRLLRETSPLPVAVYHVSGEYAMLKAAAERGWLNEKDAVLEAMTCFRRAGGDLILTYYGIEASKWLAGEK</sequence>
<comment type="function">
    <text evidence="1">Catalyzes an early step in the biosynthesis of tetrapyrroles. Binds two molecules of 5-aminolevulinate per subunit, each at a distinct site, and catalyzes their condensation to form porphobilinogen (By similarity).</text>
</comment>
<comment type="catalytic activity">
    <reaction>
        <text>2 5-aminolevulinate = porphobilinogen + 2 H2O + H(+)</text>
        <dbReference type="Rhea" id="RHEA:24064"/>
        <dbReference type="ChEBI" id="CHEBI:15377"/>
        <dbReference type="ChEBI" id="CHEBI:15378"/>
        <dbReference type="ChEBI" id="CHEBI:58126"/>
        <dbReference type="ChEBI" id="CHEBI:356416"/>
        <dbReference type="EC" id="4.2.1.24"/>
    </reaction>
</comment>
<comment type="cofactor">
    <cofactor evidence="1">
        <name>Mg(2+)</name>
        <dbReference type="ChEBI" id="CHEBI:18420"/>
    </cofactor>
    <text evidence="1">Binds 2 magnesium ions per monomer. The first magnesium ion is required for catalysis. The second functions as allosteric activator.</text>
</comment>
<comment type="pathway">
    <text>Porphyrin-containing compound metabolism; protoporphyrin-IX biosynthesis; coproporphyrinogen-III from 5-aminolevulinate: step 1/4.</text>
</comment>
<comment type="subunit">
    <text evidence="1">Homooctamer.</text>
</comment>
<comment type="subcellular location">
    <subcellularLocation>
        <location>Plastid</location>
        <location>Chloroplast</location>
    </subcellularLocation>
</comment>
<comment type="similarity">
    <text evidence="4">Belongs to the ALAD family.</text>
</comment>